<proteinExistence type="inferred from homology"/>
<organism>
    <name type="scientific">Pseudomonas putida (strain ATCC 700007 / DSM 6899 / JCM 31910 / BCRC 17059 / LMG 24140 / F1)</name>
    <dbReference type="NCBI Taxonomy" id="351746"/>
    <lineage>
        <taxon>Bacteria</taxon>
        <taxon>Pseudomonadati</taxon>
        <taxon>Pseudomonadota</taxon>
        <taxon>Gammaproteobacteria</taxon>
        <taxon>Pseudomonadales</taxon>
        <taxon>Pseudomonadaceae</taxon>
        <taxon>Pseudomonas</taxon>
    </lineage>
</organism>
<name>Y153_PSEP1</name>
<evidence type="ECO:0000255" key="1">
    <source>
        <dbReference type="HAMAP-Rule" id="MF_01361"/>
    </source>
</evidence>
<dbReference type="EMBL" id="CP000712">
    <property type="protein sequence ID" value="ABQ76328.1"/>
    <property type="molecule type" value="Genomic_DNA"/>
</dbReference>
<dbReference type="KEGG" id="ppf:Pput_0153"/>
<dbReference type="eggNOG" id="COG5487">
    <property type="taxonomic scope" value="Bacteria"/>
</dbReference>
<dbReference type="HOGENOM" id="CLU_187346_2_1_6"/>
<dbReference type="GO" id="GO:0005886">
    <property type="term" value="C:plasma membrane"/>
    <property type="evidence" value="ECO:0007669"/>
    <property type="project" value="UniProtKB-SubCell"/>
</dbReference>
<dbReference type="HAMAP" id="MF_01361">
    <property type="entry name" value="UPF0391"/>
    <property type="match status" value="1"/>
</dbReference>
<dbReference type="InterPro" id="IPR009760">
    <property type="entry name" value="DUF1328"/>
</dbReference>
<dbReference type="NCBIfam" id="NF010226">
    <property type="entry name" value="PRK13682.1-1"/>
    <property type="match status" value="1"/>
</dbReference>
<dbReference type="NCBIfam" id="NF010229">
    <property type="entry name" value="PRK13682.1-4"/>
    <property type="match status" value="1"/>
</dbReference>
<dbReference type="Pfam" id="PF07043">
    <property type="entry name" value="DUF1328"/>
    <property type="match status" value="1"/>
</dbReference>
<dbReference type="PIRSF" id="PIRSF036466">
    <property type="entry name" value="UCP036466"/>
    <property type="match status" value="1"/>
</dbReference>
<sequence>MLSWAITFLIIAIVAAVLGFGGIAGAATGIAKILFIVFLVLFVASFFFGRGRG</sequence>
<feature type="chain" id="PRO_1000067784" description="UPF0391 membrane protein Pput_0153">
    <location>
        <begin position="1"/>
        <end position="53"/>
    </location>
</feature>
<feature type="transmembrane region" description="Helical" evidence="1">
    <location>
        <begin position="4"/>
        <end position="24"/>
    </location>
</feature>
<feature type="transmembrane region" description="Helical" evidence="1">
    <location>
        <begin position="29"/>
        <end position="49"/>
    </location>
</feature>
<protein>
    <recommendedName>
        <fullName evidence="1">UPF0391 membrane protein Pput_0153</fullName>
    </recommendedName>
</protein>
<reference key="1">
    <citation type="submission" date="2007-05" db="EMBL/GenBank/DDBJ databases">
        <title>Complete sequence of Pseudomonas putida F1.</title>
        <authorList>
            <consortium name="US DOE Joint Genome Institute"/>
            <person name="Copeland A."/>
            <person name="Lucas S."/>
            <person name="Lapidus A."/>
            <person name="Barry K."/>
            <person name="Detter J.C."/>
            <person name="Glavina del Rio T."/>
            <person name="Hammon N."/>
            <person name="Israni S."/>
            <person name="Dalin E."/>
            <person name="Tice H."/>
            <person name="Pitluck S."/>
            <person name="Chain P."/>
            <person name="Malfatti S."/>
            <person name="Shin M."/>
            <person name="Vergez L."/>
            <person name="Schmutz J."/>
            <person name="Larimer F."/>
            <person name="Land M."/>
            <person name="Hauser L."/>
            <person name="Kyrpides N."/>
            <person name="Lykidis A."/>
            <person name="Parales R."/>
            <person name="Richardson P."/>
        </authorList>
    </citation>
    <scope>NUCLEOTIDE SEQUENCE [LARGE SCALE GENOMIC DNA]</scope>
    <source>
        <strain>ATCC 700007 / DSM 6899 / JCM 31910 / BCRC 17059 / LMG 24140 / F1</strain>
    </source>
</reference>
<gene>
    <name type="ordered locus">Pput_0153</name>
</gene>
<keyword id="KW-1003">Cell membrane</keyword>
<keyword id="KW-0472">Membrane</keyword>
<keyword id="KW-0812">Transmembrane</keyword>
<keyword id="KW-1133">Transmembrane helix</keyword>
<accession>A5VWR8</accession>
<comment type="subcellular location">
    <subcellularLocation>
        <location evidence="1">Cell membrane</location>
        <topology evidence="1">Multi-pass membrane protein</topology>
    </subcellularLocation>
</comment>
<comment type="similarity">
    <text evidence="1">Belongs to the UPF0391 family.</text>
</comment>